<name>LIPA_LEPCP</name>
<protein>
    <recommendedName>
        <fullName evidence="1">Lipoyl synthase</fullName>
        <ecNumber evidence="1">2.8.1.8</ecNumber>
    </recommendedName>
    <alternativeName>
        <fullName evidence="1">Lip-syn</fullName>
        <shortName evidence="1">LS</shortName>
    </alternativeName>
    <alternativeName>
        <fullName evidence="1">Lipoate synthase</fullName>
    </alternativeName>
    <alternativeName>
        <fullName evidence="1">Lipoic acid synthase</fullName>
    </alternativeName>
    <alternativeName>
        <fullName evidence="1">Sulfur insertion protein LipA</fullName>
    </alternativeName>
</protein>
<reference key="1">
    <citation type="submission" date="2008-03" db="EMBL/GenBank/DDBJ databases">
        <title>Complete sequence of Leptothrix cholodnii SP-6.</title>
        <authorList>
            <consortium name="US DOE Joint Genome Institute"/>
            <person name="Copeland A."/>
            <person name="Lucas S."/>
            <person name="Lapidus A."/>
            <person name="Glavina del Rio T."/>
            <person name="Dalin E."/>
            <person name="Tice H."/>
            <person name="Bruce D."/>
            <person name="Goodwin L."/>
            <person name="Pitluck S."/>
            <person name="Chertkov O."/>
            <person name="Brettin T."/>
            <person name="Detter J.C."/>
            <person name="Han C."/>
            <person name="Kuske C.R."/>
            <person name="Schmutz J."/>
            <person name="Larimer F."/>
            <person name="Land M."/>
            <person name="Hauser L."/>
            <person name="Kyrpides N."/>
            <person name="Lykidis A."/>
            <person name="Emerson D."/>
            <person name="Richardson P."/>
        </authorList>
    </citation>
    <scope>NUCLEOTIDE SEQUENCE [LARGE SCALE GENOMIC DNA]</scope>
    <source>
        <strain>ATCC 51168 / LMG 8142 / SP-6</strain>
    </source>
</reference>
<feature type="chain" id="PRO_1000099610" description="Lipoyl synthase">
    <location>
        <begin position="1"/>
        <end position="331"/>
    </location>
</feature>
<feature type="domain" description="Radical SAM core" evidence="2">
    <location>
        <begin position="85"/>
        <end position="303"/>
    </location>
</feature>
<feature type="binding site" evidence="1">
    <location>
        <position position="74"/>
    </location>
    <ligand>
        <name>[4Fe-4S] cluster</name>
        <dbReference type="ChEBI" id="CHEBI:49883"/>
        <label>1</label>
    </ligand>
</feature>
<feature type="binding site" evidence="1">
    <location>
        <position position="79"/>
    </location>
    <ligand>
        <name>[4Fe-4S] cluster</name>
        <dbReference type="ChEBI" id="CHEBI:49883"/>
        <label>1</label>
    </ligand>
</feature>
<feature type="binding site" evidence="1">
    <location>
        <position position="85"/>
    </location>
    <ligand>
        <name>[4Fe-4S] cluster</name>
        <dbReference type="ChEBI" id="CHEBI:49883"/>
        <label>1</label>
    </ligand>
</feature>
<feature type="binding site" evidence="1">
    <location>
        <position position="100"/>
    </location>
    <ligand>
        <name>[4Fe-4S] cluster</name>
        <dbReference type="ChEBI" id="CHEBI:49883"/>
        <label>2</label>
        <note>4Fe-4S-S-AdoMet</note>
    </ligand>
</feature>
<feature type="binding site" evidence="1">
    <location>
        <position position="104"/>
    </location>
    <ligand>
        <name>[4Fe-4S] cluster</name>
        <dbReference type="ChEBI" id="CHEBI:49883"/>
        <label>2</label>
        <note>4Fe-4S-S-AdoMet</note>
    </ligand>
</feature>
<feature type="binding site" evidence="1">
    <location>
        <position position="107"/>
    </location>
    <ligand>
        <name>[4Fe-4S] cluster</name>
        <dbReference type="ChEBI" id="CHEBI:49883"/>
        <label>2</label>
        <note>4Fe-4S-S-AdoMet</note>
    </ligand>
</feature>
<feature type="binding site" evidence="1">
    <location>
        <position position="314"/>
    </location>
    <ligand>
        <name>[4Fe-4S] cluster</name>
        <dbReference type="ChEBI" id="CHEBI:49883"/>
        <label>1</label>
    </ligand>
</feature>
<comment type="function">
    <text evidence="1">Catalyzes the radical-mediated insertion of two sulfur atoms into the C-6 and C-8 positions of the octanoyl moiety bound to the lipoyl domains of lipoate-dependent enzymes, thereby converting the octanoylated domains into lipoylated derivatives.</text>
</comment>
<comment type="catalytic activity">
    <reaction evidence="1">
        <text>[[Fe-S] cluster scaffold protein carrying a second [4Fe-4S](2+) cluster] + N(6)-octanoyl-L-lysyl-[protein] + 2 oxidized [2Fe-2S]-[ferredoxin] + 2 S-adenosyl-L-methionine + 4 H(+) = [[Fe-S] cluster scaffold protein] + N(6)-[(R)-dihydrolipoyl]-L-lysyl-[protein] + 4 Fe(3+) + 2 hydrogen sulfide + 2 5'-deoxyadenosine + 2 L-methionine + 2 reduced [2Fe-2S]-[ferredoxin]</text>
        <dbReference type="Rhea" id="RHEA:16585"/>
        <dbReference type="Rhea" id="RHEA-COMP:9928"/>
        <dbReference type="Rhea" id="RHEA-COMP:10000"/>
        <dbReference type="Rhea" id="RHEA-COMP:10001"/>
        <dbReference type="Rhea" id="RHEA-COMP:10475"/>
        <dbReference type="Rhea" id="RHEA-COMP:14568"/>
        <dbReference type="Rhea" id="RHEA-COMP:14569"/>
        <dbReference type="ChEBI" id="CHEBI:15378"/>
        <dbReference type="ChEBI" id="CHEBI:17319"/>
        <dbReference type="ChEBI" id="CHEBI:29034"/>
        <dbReference type="ChEBI" id="CHEBI:29919"/>
        <dbReference type="ChEBI" id="CHEBI:33722"/>
        <dbReference type="ChEBI" id="CHEBI:33737"/>
        <dbReference type="ChEBI" id="CHEBI:33738"/>
        <dbReference type="ChEBI" id="CHEBI:57844"/>
        <dbReference type="ChEBI" id="CHEBI:59789"/>
        <dbReference type="ChEBI" id="CHEBI:78809"/>
        <dbReference type="ChEBI" id="CHEBI:83100"/>
        <dbReference type="EC" id="2.8.1.8"/>
    </reaction>
</comment>
<comment type="cofactor">
    <cofactor evidence="1">
        <name>[4Fe-4S] cluster</name>
        <dbReference type="ChEBI" id="CHEBI:49883"/>
    </cofactor>
    <text evidence="1">Binds 2 [4Fe-4S] clusters per subunit. One cluster is coordinated with 3 cysteines and an exchangeable S-adenosyl-L-methionine.</text>
</comment>
<comment type="pathway">
    <text evidence="1">Protein modification; protein lipoylation via endogenous pathway; protein N(6)-(lipoyl)lysine from octanoyl-[acyl-carrier-protein]: step 2/2.</text>
</comment>
<comment type="subcellular location">
    <subcellularLocation>
        <location evidence="1">Cytoplasm</location>
    </subcellularLocation>
</comment>
<comment type="similarity">
    <text evidence="1">Belongs to the radical SAM superfamily. Lipoyl synthase family.</text>
</comment>
<evidence type="ECO:0000255" key="1">
    <source>
        <dbReference type="HAMAP-Rule" id="MF_00206"/>
    </source>
</evidence>
<evidence type="ECO:0000255" key="2">
    <source>
        <dbReference type="PROSITE-ProRule" id="PRU01266"/>
    </source>
</evidence>
<gene>
    <name evidence="1" type="primary">lipA</name>
    <name type="ordered locus">Lcho_0401</name>
</gene>
<accession>B1XX30</accession>
<organism>
    <name type="scientific">Leptothrix cholodnii (strain ATCC 51168 / LMG 8142 / SP-6)</name>
    <name type="common">Leptothrix discophora (strain SP-6)</name>
    <dbReference type="NCBI Taxonomy" id="395495"/>
    <lineage>
        <taxon>Bacteria</taxon>
        <taxon>Pseudomonadati</taxon>
        <taxon>Pseudomonadota</taxon>
        <taxon>Betaproteobacteria</taxon>
        <taxon>Burkholderiales</taxon>
        <taxon>Sphaerotilaceae</taxon>
        <taxon>Leptothrix</taxon>
    </lineage>
</organism>
<proteinExistence type="inferred from homology"/>
<dbReference type="EC" id="2.8.1.8" evidence="1"/>
<dbReference type="EMBL" id="CP001013">
    <property type="protein sequence ID" value="ACB32676.1"/>
    <property type="molecule type" value="Genomic_DNA"/>
</dbReference>
<dbReference type="RefSeq" id="WP_012345438.1">
    <property type="nucleotide sequence ID" value="NC_010524.1"/>
</dbReference>
<dbReference type="SMR" id="B1XX30"/>
<dbReference type="STRING" id="395495.Lcho_0401"/>
<dbReference type="KEGG" id="lch:Lcho_0401"/>
<dbReference type="eggNOG" id="COG0320">
    <property type="taxonomic scope" value="Bacteria"/>
</dbReference>
<dbReference type="HOGENOM" id="CLU_033144_2_1_4"/>
<dbReference type="OrthoDB" id="9787898at2"/>
<dbReference type="UniPathway" id="UPA00538">
    <property type="reaction ID" value="UER00593"/>
</dbReference>
<dbReference type="Proteomes" id="UP000001693">
    <property type="component" value="Chromosome"/>
</dbReference>
<dbReference type="GO" id="GO:0005737">
    <property type="term" value="C:cytoplasm"/>
    <property type="evidence" value="ECO:0007669"/>
    <property type="project" value="UniProtKB-SubCell"/>
</dbReference>
<dbReference type="GO" id="GO:0051539">
    <property type="term" value="F:4 iron, 4 sulfur cluster binding"/>
    <property type="evidence" value="ECO:0007669"/>
    <property type="project" value="UniProtKB-UniRule"/>
</dbReference>
<dbReference type="GO" id="GO:0016992">
    <property type="term" value="F:lipoate synthase activity"/>
    <property type="evidence" value="ECO:0007669"/>
    <property type="project" value="UniProtKB-UniRule"/>
</dbReference>
<dbReference type="GO" id="GO:0046872">
    <property type="term" value="F:metal ion binding"/>
    <property type="evidence" value="ECO:0007669"/>
    <property type="project" value="UniProtKB-KW"/>
</dbReference>
<dbReference type="CDD" id="cd01335">
    <property type="entry name" value="Radical_SAM"/>
    <property type="match status" value="1"/>
</dbReference>
<dbReference type="FunFam" id="3.20.20.70:FF:000040">
    <property type="entry name" value="Lipoyl synthase"/>
    <property type="match status" value="1"/>
</dbReference>
<dbReference type="Gene3D" id="3.20.20.70">
    <property type="entry name" value="Aldolase class I"/>
    <property type="match status" value="1"/>
</dbReference>
<dbReference type="HAMAP" id="MF_00206">
    <property type="entry name" value="Lipoyl_synth"/>
    <property type="match status" value="1"/>
</dbReference>
<dbReference type="InterPro" id="IPR013785">
    <property type="entry name" value="Aldolase_TIM"/>
</dbReference>
<dbReference type="InterPro" id="IPR006638">
    <property type="entry name" value="Elp3/MiaA/NifB-like_rSAM"/>
</dbReference>
<dbReference type="InterPro" id="IPR031691">
    <property type="entry name" value="LIAS_N"/>
</dbReference>
<dbReference type="InterPro" id="IPR003698">
    <property type="entry name" value="Lipoyl_synth"/>
</dbReference>
<dbReference type="InterPro" id="IPR007197">
    <property type="entry name" value="rSAM"/>
</dbReference>
<dbReference type="NCBIfam" id="TIGR00510">
    <property type="entry name" value="lipA"/>
    <property type="match status" value="1"/>
</dbReference>
<dbReference type="NCBIfam" id="NF004019">
    <property type="entry name" value="PRK05481.1"/>
    <property type="match status" value="1"/>
</dbReference>
<dbReference type="NCBIfam" id="NF009544">
    <property type="entry name" value="PRK12928.1"/>
    <property type="match status" value="1"/>
</dbReference>
<dbReference type="PANTHER" id="PTHR10949">
    <property type="entry name" value="LIPOYL SYNTHASE"/>
    <property type="match status" value="1"/>
</dbReference>
<dbReference type="PANTHER" id="PTHR10949:SF0">
    <property type="entry name" value="LIPOYL SYNTHASE, MITOCHONDRIAL"/>
    <property type="match status" value="1"/>
</dbReference>
<dbReference type="Pfam" id="PF16881">
    <property type="entry name" value="LIAS_N"/>
    <property type="match status" value="1"/>
</dbReference>
<dbReference type="Pfam" id="PF04055">
    <property type="entry name" value="Radical_SAM"/>
    <property type="match status" value="1"/>
</dbReference>
<dbReference type="PIRSF" id="PIRSF005963">
    <property type="entry name" value="Lipoyl_synth"/>
    <property type="match status" value="1"/>
</dbReference>
<dbReference type="SFLD" id="SFLDF00271">
    <property type="entry name" value="lipoyl_synthase"/>
    <property type="match status" value="1"/>
</dbReference>
<dbReference type="SFLD" id="SFLDG01058">
    <property type="entry name" value="lipoyl_synthase_like"/>
    <property type="match status" value="1"/>
</dbReference>
<dbReference type="SMART" id="SM00729">
    <property type="entry name" value="Elp3"/>
    <property type="match status" value="1"/>
</dbReference>
<dbReference type="SUPFAM" id="SSF102114">
    <property type="entry name" value="Radical SAM enzymes"/>
    <property type="match status" value="1"/>
</dbReference>
<dbReference type="PROSITE" id="PS51918">
    <property type="entry name" value="RADICAL_SAM"/>
    <property type="match status" value="1"/>
</dbReference>
<keyword id="KW-0004">4Fe-4S</keyword>
<keyword id="KW-0963">Cytoplasm</keyword>
<keyword id="KW-0408">Iron</keyword>
<keyword id="KW-0411">Iron-sulfur</keyword>
<keyword id="KW-0479">Metal-binding</keyword>
<keyword id="KW-1185">Reference proteome</keyword>
<keyword id="KW-0949">S-adenosyl-L-methionine</keyword>
<keyword id="KW-0808">Transferase</keyword>
<sequence length="331" mass="36783">MSTENTTRQAETGAAYDATAKQKAQAKTARIPIKVVPAETLKKPDWIRVKAGSPTTRFYEIKNILREHQLHTVCEEASCPNIGECFGKGTATFMIMGDKCTRRCPFCDVGHGRPDPLDVNEPANLAKTIAALKLKYVVITSVDRDDLRDGGAGHYVECIRQTRAASPETRIEVLVPDFRGRMDRALEILKTAPPDVMNHNMETVPRLYKEARPGADYQFSLTLLKRFKEEVPGVPTKSGLMVGLGETDDEILDVMRDMRAHDIDMLTIGQYLAPSGHHLPVRRYVHPDTFRMFETEAYKMGFTHAAVGAMVRSSYHADQQAHQAGVDGAIG</sequence>